<proteinExistence type="predicted"/>
<organism>
    <name type="scientific">Caenorhabditis elegans</name>
    <dbReference type="NCBI Taxonomy" id="6239"/>
    <lineage>
        <taxon>Eukaryota</taxon>
        <taxon>Metazoa</taxon>
        <taxon>Ecdysozoa</taxon>
        <taxon>Nematoda</taxon>
        <taxon>Chromadorea</taxon>
        <taxon>Rhabditida</taxon>
        <taxon>Rhabditina</taxon>
        <taxon>Rhabditomorpha</taxon>
        <taxon>Rhabditoidea</taxon>
        <taxon>Rhabditidae</taxon>
        <taxon>Peloderinae</taxon>
        <taxon>Caenorhabditis</taxon>
    </lineage>
</organism>
<keyword id="KW-1185">Reference proteome</keyword>
<reference key="1">
    <citation type="journal article" date="1994" name="Nature">
        <title>2.2 Mb of contiguous nucleotide sequence from chromosome III of C. elegans.</title>
        <authorList>
            <person name="Wilson R."/>
            <person name="Ainscough R."/>
            <person name="Anderson K."/>
            <person name="Baynes C."/>
            <person name="Berks M."/>
            <person name="Bonfield J."/>
            <person name="Burton J."/>
            <person name="Connell M."/>
            <person name="Copsey T."/>
            <person name="Cooper J."/>
            <person name="Coulson A."/>
            <person name="Craxton M."/>
            <person name="Dear S."/>
            <person name="Du Z."/>
            <person name="Durbin R."/>
            <person name="Favello A."/>
            <person name="Fraser A."/>
            <person name="Fulton L."/>
            <person name="Gardner A."/>
            <person name="Green P."/>
            <person name="Hawkins T."/>
            <person name="Hillier L."/>
            <person name="Jier M."/>
            <person name="Johnston L."/>
            <person name="Jones M."/>
            <person name="Kershaw J."/>
            <person name="Kirsten J."/>
            <person name="Laisster N."/>
            <person name="Latreille P."/>
            <person name="Lightning J."/>
            <person name="Lloyd C."/>
            <person name="Mortimore B."/>
            <person name="O'Callaghan M."/>
            <person name="Parsons J."/>
            <person name="Percy C."/>
            <person name="Rifken L."/>
            <person name="Roopra A."/>
            <person name="Saunders D."/>
            <person name="Shownkeen R."/>
            <person name="Sims M."/>
            <person name="Smaldon N."/>
            <person name="Smith A."/>
            <person name="Smith M."/>
            <person name="Sonnhammer E."/>
            <person name="Staden R."/>
            <person name="Sulston J."/>
            <person name="Thierry-Mieg J."/>
            <person name="Thomas K."/>
            <person name="Vaudin M."/>
            <person name="Vaughan K."/>
            <person name="Waterston R."/>
            <person name="Watson A."/>
            <person name="Weinstock L."/>
            <person name="Wilkinson-Sproat J."/>
            <person name="Wohldman P."/>
        </authorList>
    </citation>
    <scope>NUCLEOTIDE SEQUENCE [LARGE SCALE GENOMIC DNA]</scope>
    <source>
        <strain>Bristol N2</strain>
    </source>
</reference>
<reference key="2">
    <citation type="journal article" date="1998" name="Science">
        <title>Genome sequence of the nematode C. elegans: a platform for investigating biology.</title>
        <authorList>
            <consortium name="The C. elegans sequencing consortium"/>
        </authorList>
    </citation>
    <scope>NUCLEOTIDE SEQUENCE [LARGE SCALE GENOMIC DNA]</scope>
    <source>
        <strain>Bristol N2</strain>
    </source>
</reference>
<name>YKK0_CAEEL</name>
<protein>
    <recommendedName>
        <fullName>Uncharacterized protein C02F5.10</fullName>
    </recommendedName>
</protein>
<gene>
    <name type="ORF">C02F5.10</name>
</gene>
<feature type="chain" id="PRO_0000065112" description="Uncharacterized protein C02F5.10">
    <location>
        <begin position="1"/>
        <end position="145"/>
    </location>
</feature>
<feature type="region of interest" description="Disordered" evidence="1">
    <location>
        <begin position="1"/>
        <end position="61"/>
    </location>
</feature>
<feature type="compositionally biased region" description="Basic and acidic residues" evidence="1">
    <location>
        <begin position="1"/>
        <end position="18"/>
    </location>
</feature>
<sequence length="145" mass="16481">MAEQQPSKEEKKEDKKDEKEEELPAPSVQQSIRQLPKIQITDDDKGEQLPECTEGEWDASDEPFSAELLNVKNAPNKVSVFSGPYRSKETIEKIKKFRAAMPPVIPIIDERPDKLAQMMSRIFSEIIDGRDLSKIKVTVSTQLPQ</sequence>
<dbReference type="EMBL" id="FO080288">
    <property type="protein sequence ID" value="CCD62641.1"/>
    <property type="molecule type" value="Genomic_DNA"/>
</dbReference>
<dbReference type="PIR" id="S44612">
    <property type="entry name" value="S44612"/>
</dbReference>
<dbReference type="RefSeq" id="NP_498809.2">
    <property type="nucleotide sequence ID" value="NM_066408.6"/>
</dbReference>
<dbReference type="BioGRID" id="46984">
    <property type="interactions" value="11"/>
</dbReference>
<dbReference type="FunCoup" id="P34287">
    <property type="interactions" value="4"/>
</dbReference>
<dbReference type="PaxDb" id="6239-C02F5.10"/>
<dbReference type="EnsemblMetazoa" id="C02F5.10.1">
    <property type="protein sequence ID" value="C02F5.10.1"/>
    <property type="gene ID" value="WBGene00015351"/>
</dbReference>
<dbReference type="GeneID" id="182123"/>
<dbReference type="KEGG" id="cel:CELE_C02F5.10"/>
<dbReference type="UCSC" id="C02F5.10">
    <property type="organism name" value="c. elegans"/>
</dbReference>
<dbReference type="AGR" id="WB:WBGene00015351"/>
<dbReference type="CTD" id="182123"/>
<dbReference type="WormBase" id="C02F5.10">
    <property type="protein sequence ID" value="CE43958"/>
    <property type="gene ID" value="WBGene00015351"/>
</dbReference>
<dbReference type="eggNOG" id="ENOG502TI0C">
    <property type="taxonomic scope" value="Eukaryota"/>
</dbReference>
<dbReference type="GeneTree" id="ENSGT00970000196697"/>
<dbReference type="HOGENOM" id="CLU_1788574_0_0_1"/>
<dbReference type="InParanoid" id="P34287"/>
<dbReference type="OMA" id="CTEGEWD"/>
<dbReference type="OrthoDB" id="5875813at2759"/>
<dbReference type="PRO" id="PR:P34287"/>
<dbReference type="Proteomes" id="UP000001940">
    <property type="component" value="Chromosome III"/>
</dbReference>
<dbReference type="Bgee" id="WBGene00015351">
    <property type="expression patterns" value="Expressed in germ line (C elegans) and 4 other cell types or tissues"/>
</dbReference>
<dbReference type="InterPro" id="IPR020149">
    <property type="entry name" value="Uncharacterised_C02F5.10"/>
</dbReference>
<dbReference type="Pfam" id="PF17309">
    <property type="entry name" value="DUF5356"/>
    <property type="match status" value="1"/>
</dbReference>
<accession>P34287</accession>
<evidence type="ECO:0000256" key="1">
    <source>
        <dbReference type="SAM" id="MobiDB-lite"/>
    </source>
</evidence>